<sequence length="292" mass="32529">MAKTDKVKIFFQHVMPKHLISRLIGKFAAARAGWFTQLFIRWFIRQYKIDMSEAIEESPKAYKTFNAFFTRHLKPELRPLEASESELAHPVDGAVSQLGDIENGRIFQAKGHDYSLQELLGGNEEDAKPFVDGKFATIYLAPKDYHRIHMPCDGVLKKMIYVPGDLYSVNPLTAANVPNLFARNERVVAIFDTEVGPMSLVLVGATIVASIGTVWSGTITPPTGGRIQSWSYPTSGHSAIHLKKGEEMGHFKLGSTVVLTFAKDAIEFNDELKPLSVTRMGEVMAEIKESDD</sequence>
<name>PSD_IDILO</name>
<proteinExistence type="inferred from homology"/>
<keyword id="KW-1003">Cell membrane</keyword>
<keyword id="KW-0210">Decarboxylase</keyword>
<keyword id="KW-0444">Lipid biosynthesis</keyword>
<keyword id="KW-0443">Lipid metabolism</keyword>
<keyword id="KW-0456">Lyase</keyword>
<keyword id="KW-0472">Membrane</keyword>
<keyword id="KW-0594">Phospholipid biosynthesis</keyword>
<keyword id="KW-1208">Phospholipid metabolism</keyword>
<keyword id="KW-0670">Pyruvate</keyword>
<keyword id="KW-1185">Reference proteome</keyword>
<keyword id="KW-0865">Zymogen</keyword>
<gene>
    <name evidence="1" type="primary">psd</name>
    <name type="ordered locus">IL2302</name>
</gene>
<feature type="chain" id="PRO_0000029669" description="Phosphatidylserine decarboxylase beta chain" evidence="1">
    <location>
        <begin position="1"/>
        <end position="254"/>
    </location>
</feature>
<feature type="chain" id="PRO_0000029670" description="Phosphatidylserine decarboxylase alpha chain" evidence="1">
    <location>
        <begin position="255"/>
        <end position="292"/>
    </location>
</feature>
<feature type="active site" description="Charge relay system; for autoendoproteolytic cleavage activity" evidence="1">
    <location>
        <position position="92"/>
    </location>
</feature>
<feature type="active site" description="Charge relay system; for autoendoproteolytic cleavage activity" evidence="1">
    <location>
        <position position="149"/>
    </location>
</feature>
<feature type="active site" description="Charge relay system; for autoendoproteolytic cleavage activity" evidence="1">
    <location>
        <position position="255"/>
    </location>
</feature>
<feature type="active site" description="Schiff-base intermediate with substrate; via pyruvic acid; for decarboxylase activity" evidence="1">
    <location>
        <position position="255"/>
    </location>
</feature>
<feature type="site" description="Cleavage (non-hydrolytic); by autocatalysis" evidence="1">
    <location>
        <begin position="254"/>
        <end position="255"/>
    </location>
</feature>
<feature type="modified residue" description="Pyruvic acid (Ser); by autocatalysis" evidence="1">
    <location>
        <position position="255"/>
    </location>
</feature>
<evidence type="ECO:0000255" key="1">
    <source>
        <dbReference type="HAMAP-Rule" id="MF_00662"/>
    </source>
</evidence>
<comment type="function">
    <text evidence="1">Catalyzes the formation of phosphatidylethanolamine (PtdEtn) from phosphatidylserine (PtdSer).</text>
</comment>
<comment type="catalytic activity">
    <reaction evidence="1">
        <text>a 1,2-diacyl-sn-glycero-3-phospho-L-serine + H(+) = a 1,2-diacyl-sn-glycero-3-phosphoethanolamine + CO2</text>
        <dbReference type="Rhea" id="RHEA:20828"/>
        <dbReference type="ChEBI" id="CHEBI:15378"/>
        <dbReference type="ChEBI" id="CHEBI:16526"/>
        <dbReference type="ChEBI" id="CHEBI:57262"/>
        <dbReference type="ChEBI" id="CHEBI:64612"/>
        <dbReference type="EC" id="4.1.1.65"/>
    </reaction>
</comment>
<comment type="cofactor">
    <cofactor evidence="1">
        <name>pyruvate</name>
        <dbReference type="ChEBI" id="CHEBI:15361"/>
    </cofactor>
    <text evidence="1">Binds 1 pyruvoyl group covalently per subunit.</text>
</comment>
<comment type="pathway">
    <text evidence="1">Phospholipid metabolism; phosphatidylethanolamine biosynthesis; phosphatidylethanolamine from CDP-diacylglycerol: step 2/2.</text>
</comment>
<comment type="subunit">
    <text evidence="1">Heterodimer of a large membrane-associated beta subunit and a small pyruvoyl-containing alpha subunit.</text>
</comment>
<comment type="subcellular location">
    <subcellularLocation>
        <location evidence="1">Cell membrane</location>
        <topology evidence="1">Peripheral membrane protein</topology>
    </subcellularLocation>
</comment>
<comment type="PTM">
    <text evidence="1">Is synthesized initially as an inactive proenzyme. Formation of the active enzyme involves a self-maturation process in which the active site pyruvoyl group is generated from an internal serine residue via an autocatalytic post-translational modification. Two non-identical subunits are generated from the proenzyme in this reaction, and the pyruvate is formed at the N-terminus of the alpha chain, which is derived from the carboxyl end of the proenzyme. The autoendoproteolytic cleavage occurs by a canonical serine protease mechanism, in which the side chain hydroxyl group of the serine supplies its oxygen atom to form the C-terminus of the beta chain, while the remainder of the serine residue undergoes an oxidative deamination to produce ammonia and the pyruvoyl prosthetic group on the alpha chain. During this reaction, the Ser that is part of the protease active site of the proenzyme becomes the pyruvoyl prosthetic group, which constitutes an essential element of the active site of the mature decarboxylase.</text>
</comment>
<comment type="similarity">
    <text evidence="1">Belongs to the phosphatidylserine decarboxylase family. PSD-B subfamily. Prokaryotic type I sub-subfamily.</text>
</comment>
<protein>
    <recommendedName>
        <fullName evidence="1">Phosphatidylserine decarboxylase proenzyme</fullName>
        <ecNumber evidence="1">4.1.1.65</ecNumber>
    </recommendedName>
    <component>
        <recommendedName>
            <fullName evidence="1">Phosphatidylserine decarboxylase alpha chain</fullName>
        </recommendedName>
    </component>
    <component>
        <recommendedName>
            <fullName evidence="1">Phosphatidylserine decarboxylase beta chain</fullName>
        </recommendedName>
    </component>
</protein>
<dbReference type="EC" id="4.1.1.65" evidence="1"/>
<dbReference type="EMBL" id="AE017340">
    <property type="protein sequence ID" value="AAV83134.1"/>
    <property type="molecule type" value="Genomic_DNA"/>
</dbReference>
<dbReference type="SMR" id="Q5QVW0"/>
<dbReference type="STRING" id="283942.IL2302"/>
<dbReference type="GeneID" id="41337498"/>
<dbReference type="KEGG" id="ilo:IL2302"/>
<dbReference type="eggNOG" id="COG0688">
    <property type="taxonomic scope" value="Bacteria"/>
</dbReference>
<dbReference type="HOGENOM" id="CLU_029061_4_1_6"/>
<dbReference type="OrthoDB" id="9802030at2"/>
<dbReference type="UniPathway" id="UPA00558">
    <property type="reaction ID" value="UER00616"/>
</dbReference>
<dbReference type="Proteomes" id="UP000001171">
    <property type="component" value="Chromosome"/>
</dbReference>
<dbReference type="GO" id="GO:0005886">
    <property type="term" value="C:plasma membrane"/>
    <property type="evidence" value="ECO:0007669"/>
    <property type="project" value="UniProtKB-SubCell"/>
</dbReference>
<dbReference type="GO" id="GO:0004609">
    <property type="term" value="F:phosphatidylserine decarboxylase activity"/>
    <property type="evidence" value="ECO:0007669"/>
    <property type="project" value="UniProtKB-UniRule"/>
</dbReference>
<dbReference type="GO" id="GO:0006646">
    <property type="term" value="P:phosphatidylethanolamine biosynthetic process"/>
    <property type="evidence" value="ECO:0007669"/>
    <property type="project" value="UniProtKB-UniRule"/>
</dbReference>
<dbReference type="HAMAP" id="MF_00662">
    <property type="entry name" value="PS_decarb_PSD_B_type1"/>
    <property type="match status" value="1"/>
</dbReference>
<dbReference type="InterPro" id="IPR003817">
    <property type="entry name" value="PS_Dcarbxylase"/>
</dbReference>
<dbReference type="InterPro" id="IPR033177">
    <property type="entry name" value="PSD-B"/>
</dbReference>
<dbReference type="InterPro" id="IPR033178">
    <property type="entry name" value="PSD_type1_pro"/>
</dbReference>
<dbReference type="NCBIfam" id="TIGR00163">
    <property type="entry name" value="PS_decarb"/>
    <property type="match status" value="1"/>
</dbReference>
<dbReference type="PANTHER" id="PTHR10067">
    <property type="entry name" value="PHOSPHATIDYLSERINE DECARBOXYLASE"/>
    <property type="match status" value="1"/>
</dbReference>
<dbReference type="PANTHER" id="PTHR10067:SF6">
    <property type="entry name" value="PHOSPHATIDYLSERINE DECARBOXYLASE PROENZYME, MITOCHONDRIAL"/>
    <property type="match status" value="1"/>
</dbReference>
<dbReference type="Pfam" id="PF02666">
    <property type="entry name" value="PS_Dcarbxylase"/>
    <property type="match status" value="1"/>
</dbReference>
<accession>Q5QVW0</accession>
<reference key="1">
    <citation type="journal article" date="2004" name="Proc. Natl. Acad. Sci. U.S.A.">
        <title>Genome sequence of the deep-sea gamma-proteobacterium Idiomarina loihiensis reveals amino acid fermentation as a source of carbon and energy.</title>
        <authorList>
            <person name="Hou S."/>
            <person name="Saw J.H."/>
            <person name="Lee K.S."/>
            <person name="Freitas T.A."/>
            <person name="Belisle C."/>
            <person name="Kawarabayasi Y."/>
            <person name="Donachie S.P."/>
            <person name="Pikina A."/>
            <person name="Galperin M.Y."/>
            <person name="Koonin E.V."/>
            <person name="Makarova K.S."/>
            <person name="Omelchenko M.V."/>
            <person name="Sorokin A."/>
            <person name="Wolf Y.I."/>
            <person name="Li Q.X."/>
            <person name="Keum Y.S."/>
            <person name="Campbell S."/>
            <person name="Denery J."/>
            <person name="Aizawa S."/>
            <person name="Shibata S."/>
            <person name="Malahoff A."/>
            <person name="Alam M."/>
        </authorList>
    </citation>
    <scope>NUCLEOTIDE SEQUENCE [LARGE SCALE GENOMIC DNA]</scope>
    <source>
        <strain>ATCC BAA-735 / DSM 15497 / L2-TR</strain>
    </source>
</reference>
<organism>
    <name type="scientific">Idiomarina loihiensis (strain ATCC BAA-735 / DSM 15497 / L2-TR)</name>
    <dbReference type="NCBI Taxonomy" id="283942"/>
    <lineage>
        <taxon>Bacteria</taxon>
        <taxon>Pseudomonadati</taxon>
        <taxon>Pseudomonadota</taxon>
        <taxon>Gammaproteobacteria</taxon>
        <taxon>Alteromonadales</taxon>
        <taxon>Idiomarinaceae</taxon>
        <taxon>Idiomarina</taxon>
    </lineage>
</organism>